<feature type="chain" id="PRO_0000260511" description="Protein MEMO1">
    <location>
        <begin position="1"/>
        <end position="297"/>
    </location>
</feature>
<sequence length="297" mass="33403">MSNRMVCREASHAGSWYTASGSQLNAQLEGWLSQAQSIAGPARAIIAPHAGYTYCGACAAHAYKQVDPSITRRVFILGPSHHVPLSRCALSPAEVYRTPLYDLRIDQKVYADLWKTGMFERMSLQTDEDEHSIEMHLPYTAKAMENHKDEFSIVPVLVGALSGSKEQEYGKLLSKYLADPSNLFIISPDFCHWGQRFRYTYYDESQGEIYRSIEHLDKMGMGIIEQLDPISFSNYLKKYHNTICGRHPIGVLLNAVAELKKNGIDMNFSFLNYAQSSQCRNWSDSSVSYAAGALIVH</sequence>
<evidence type="ECO:0000250" key="1"/>
<evidence type="ECO:0000305" key="2"/>
<name>MEMO1_DANRE</name>
<accession>Q803S3</accession>
<organism>
    <name type="scientific">Danio rerio</name>
    <name type="common">Zebrafish</name>
    <name type="synonym">Brachydanio rerio</name>
    <dbReference type="NCBI Taxonomy" id="7955"/>
    <lineage>
        <taxon>Eukaryota</taxon>
        <taxon>Metazoa</taxon>
        <taxon>Chordata</taxon>
        <taxon>Craniata</taxon>
        <taxon>Vertebrata</taxon>
        <taxon>Euteleostomi</taxon>
        <taxon>Actinopterygii</taxon>
        <taxon>Neopterygii</taxon>
        <taxon>Teleostei</taxon>
        <taxon>Ostariophysi</taxon>
        <taxon>Cypriniformes</taxon>
        <taxon>Danionidae</taxon>
        <taxon>Danioninae</taxon>
        <taxon>Danio</taxon>
    </lineage>
</organism>
<proteinExistence type="evidence at transcript level"/>
<comment type="function">
    <text evidence="1">May control cell migration by relaying extracellular chemotactic signals to the microtubule cytoskeleton. Mediator of ERBB2 signaling (By similarity).</text>
</comment>
<comment type="subunit">
    <text evidence="1">Interacts with ERBB2.</text>
</comment>
<comment type="similarity">
    <text evidence="2">Belongs to the MEMO1 family.</text>
</comment>
<reference key="1">
    <citation type="submission" date="2003-01" db="EMBL/GenBank/DDBJ databases">
        <authorList>
            <consortium name="NIH - Zebrafish Gene Collection (ZGC) project"/>
        </authorList>
    </citation>
    <scope>NUCLEOTIDE SEQUENCE [LARGE SCALE MRNA]</scope>
    <source>
        <strain>AB</strain>
    </source>
</reference>
<protein>
    <recommendedName>
        <fullName>Protein MEMO1</fullName>
    </recommendedName>
    <alternativeName>
        <fullName>Mediator of ErbB2-driven cell motility 1</fullName>
        <shortName>Memo-1</shortName>
    </alternativeName>
</protein>
<keyword id="KW-1185">Reference proteome</keyword>
<dbReference type="EMBL" id="BC044360">
    <property type="protein sequence ID" value="AAH44360.1"/>
    <property type="molecule type" value="mRNA"/>
</dbReference>
<dbReference type="RefSeq" id="NP_956088.1">
    <property type="nucleotide sequence ID" value="NM_199794.1"/>
</dbReference>
<dbReference type="SMR" id="Q803S3"/>
<dbReference type="FunCoup" id="Q803S3">
    <property type="interactions" value="1323"/>
</dbReference>
<dbReference type="STRING" id="7955.ENSDARP00000009876"/>
<dbReference type="PaxDb" id="7955-ENSDARP00000009876"/>
<dbReference type="GeneID" id="327360"/>
<dbReference type="KEGG" id="dre:327360"/>
<dbReference type="AGR" id="ZFIN:ZDB-GENE-030131-5571"/>
<dbReference type="CTD" id="51072"/>
<dbReference type="ZFIN" id="ZDB-GENE-030131-5571">
    <property type="gene designation" value="memo1"/>
</dbReference>
<dbReference type="eggNOG" id="KOG3086">
    <property type="taxonomic scope" value="Eukaryota"/>
</dbReference>
<dbReference type="InParanoid" id="Q803S3"/>
<dbReference type="OrthoDB" id="417112at2759"/>
<dbReference type="PhylomeDB" id="Q803S3"/>
<dbReference type="Reactome" id="R-DRE-6785631">
    <property type="pathway name" value="ERBB2 Regulates Cell Motility"/>
</dbReference>
<dbReference type="PRO" id="PR:Q803S3"/>
<dbReference type="Proteomes" id="UP000000437">
    <property type="component" value="Chromosome 13"/>
</dbReference>
<dbReference type="CDD" id="cd07361">
    <property type="entry name" value="MEMO_like"/>
    <property type="match status" value="1"/>
</dbReference>
<dbReference type="FunFam" id="3.40.830.10:FF:000002">
    <property type="entry name" value="MEMO1 isoform 1"/>
    <property type="match status" value="1"/>
</dbReference>
<dbReference type="Gene3D" id="3.40.830.10">
    <property type="entry name" value="LigB-like"/>
    <property type="match status" value="1"/>
</dbReference>
<dbReference type="HAMAP" id="MF_00055">
    <property type="entry name" value="MEMO1"/>
    <property type="match status" value="1"/>
</dbReference>
<dbReference type="InterPro" id="IPR002737">
    <property type="entry name" value="MEMO1_fam"/>
</dbReference>
<dbReference type="NCBIfam" id="TIGR04336">
    <property type="entry name" value="AmmeMemoSam_B"/>
    <property type="match status" value="1"/>
</dbReference>
<dbReference type="PANTHER" id="PTHR11060">
    <property type="entry name" value="PROTEIN MEMO1"/>
    <property type="match status" value="1"/>
</dbReference>
<dbReference type="PANTHER" id="PTHR11060:SF0">
    <property type="entry name" value="PROTEIN MEMO1"/>
    <property type="match status" value="1"/>
</dbReference>
<dbReference type="Pfam" id="PF01875">
    <property type="entry name" value="Memo"/>
    <property type="match status" value="1"/>
</dbReference>
<gene>
    <name type="primary">memo1</name>
    <name type="ORF">zgc:55290</name>
</gene>